<comment type="function">
    <text evidence="1">Binds to 23S rRNA. Forms part of two intersubunit bridges in the 70S ribosome.</text>
</comment>
<comment type="subunit">
    <text evidence="1">Part of the 50S ribosomal subunit. Forms a cluster with proteins L3 and L19. In the 70S ribosome, L14 and L19 interact and together make contacts with the 16S rRNA in bridges B5 and B8.</text>
</comment>
<comment type="similarity">
    <text evidence="1">Belongs to the universal ribosomal protein uL14 family.</text>
</comment>
<gene>
    <name evidence="1" type="primary">rplN</name>
    <name type="ordered locus">HH_1388</name>
</gene>
<keyword id="KW-1185">Reference proteome</keyword>
<keyword id="KW-0687">Ribonucleoprotein</keyword>
<keyword id="KW-0689">Ribosomal protein</keyword>
<keyword id="KW-0694">RNA-binding</keyword>
<keyword id="KW-0699">rRNA-binding</keyword>
<organism>
    <name type="scientific">Helicobacter hepaticus (strain ATCC 51449 / 3B1)</name>
    <dbReference type="NCBI Taxonomy" id="235279"/>
    <lineage>
        <taxon>Bacteria</taxon>
        <taxon>Pseudomonadati</taxon>
        <taxon>Campylobacterota</taxon>
        <taxon>Epsilonproteobacteria</taxon>
        <taxon>Campylobacterales</taxon>
        <taxon>Helicobacteraceae</taxon>
        <taxon>Helicobacter</taxon>
    </lineage>
</organism>
<reference key="1">
    <citation type="journal article" date="2003" name="Proc. Natl. Acad. Sci. U.S.A.">
        <title>The complete genome sequence of the carcinogenic bacterium Helicobacter hepaticus.</title>
        <authorList>
            <person name="Suerbaum S."/>
            <person name="Josenhans C."/>
            <person name="Sterzenbach T."/>
            <person name="Drescher B."/>
            <person name="Brandt P."/>
            <person name="Bell M."/>
            <person name="Droege M."/>
            <person name="Fartmann B."/>
            <person name="Fischer H.-P."/>
            <person name="Ge Z."/>
            <person name="Hoerster A."/>
            <person name="Holland R."/>
            <person name="Klein K."/>
            <person name="Koenig J."/>
            <person name="Macko L."/>
            <person name="Mendz G.L."/>
            <person name="Nyakatura G."/>
            <person name="Schauer D.B."/>
            <person name="Shen Z."/>
            <person name="Weber J."/>
            <person name="Frosch M."/>
            <person name="Fox J.G."/>
        </authorList>
    </citation>
    <scope>NUCLEOTIDE SEQUENCE [LARGE SCALE GENOMIC DNA]</scope>
    <source>
        <strain>ATCC 51449 / 3B1</strain>
    </source>
</reference>
<dbReference type="EMBL" id="AE017125">
    <property type="protein sequence ID" value="AAP77985.1"/>
    <property type="molecule type" value="Genomic_DNA"/>
</dbReference>
<dbReference type="RefSeq" id="WP_011116228.1">
    <property type="nucleotide sequence ID" value="NC_004917.1"/>
</dbReference>
<dbReference type="SMR" id="Q7VGD4"/>
<dbReference type="STRING" id="235279.HH_1388"/>
<dbReference type="KEGG" id="hhe:HH_1388"/>
<dbReference type="eggNOG" id="COG0093">
    <property type="taxonomic scope" value="Bacteria"/>
</dbReference>
<dbReference type="HOGENOM" id="CLU_095071_2_1_7"/>
<dbReference type="OrthoDB" id="9806379at2"/>
<dbReference type="Proteomes" id="UP000002495">
    <property type="component" value="Chromosome"/>
</dbReference>
<dbReference type="GO" id="GO:0022625">
    <property type="term" value="C:cytosolic large ribosomal subunit"/>
    <property type="evidence" value="ECO:0007669"/>
    <property type="project" value="TreeGrafter"/>
</dbReference>
<dbReference type="GO" id="GO:0070180">
    <property type="term" value="F:large ribosomal subunit rRNA binding"/>
    <property type="evidence" value="ECO:0007669"/>
    <property type="project" value="TreeGrafter"/>
</dbReference>
<dbReference type="GO" id="GO:0003735">
    <property type="term" value="F:structural constituent of ribosome"/>
    <property type="evidence" value="ECO:0007669"/>
    <property type="project" value="InterPro"/>
</dbReference>
<dbReference type="GO" id="GO:0006412">
    <property type="term" value="P:translation"/>
    <property type="evidence" value="ECO:0007669"/>
    <property type="project" value="UniProtKB-UniRule"/>
</dbReference>
<dbReference type="CDD" id="cd00337">
    <property type="entry name" value="Ribosomal_uL14"/>
    <property type="match status" value="1"/>
</dbReference>
<dbReference type="FunFam" id="2.40.150.20:FF:000001">
    <property type="entry name" value="50S ribosomal protein L14"/>
    <property type="match status" value="1"/>
</dbReference>
<dbReference type="Gene3D" id="2.40.150.20">
    <property type="entry name" value="Ribosomal protein L14"/>
    <property type="match status" value="1"/>
</dbReference>
<dbReference type="HAMAP" id="MF_01367">
    <property type="entry name" value="Ribosomal_uL14"/>
    <property type="match status" value="1"/>
</dbReference>
<dbReference type="InterPro" id="IPR000218">
    <property type="entry name" value="Ribosomal_uL14"/>
</dbReference>
<dbReference type="InterPro" id="IPR005745">
    <property type="entry name" value="Ribosomal_uL14_bac-type"/>
</dbReference>
<dbReference type="InterPro" id="IPR019972">
    <property type="entry name" value="Ribosomal_uL14_CS"/>
</dbReference>
<dbReference type="InterPro" id="IPR036853">
    <property type="entry name" value="Ribosomal_uL14_sf"/>
</dbReference>
<dbReference type="NCBIfam" id="TIGR01067">
    <property type="entry name" value="rplN_bact"/>
    <property type="match status" value="1"/>
</dbReference>
<dbReference type="PANTHER" id="PTHR11761">
    <property type="entry name" value="50S/60S RIBOSOMAL PROTEIN L14/L23"/>
    <property type="match status" value="1"/>
</dbReference>
<dbReference type="PANTHER" id="PTHR11761:SF3">
    <property type="entry name" value="LARGE RIBOSOMAL SUBUNIT PROTEIN UL14M"/>
    <property type="match status" value="1"/>
</dbReference>
<dbReference type="Pfam" id="PF00238">
    <property type="entry name" value="Ribosomal_L14"/>
    <property type="match status" value="1"/>
</dbReference>
<dbReference type="SMART" id="SM01374">
    <property type="entry name" value="Ribosomal_L14"/>
    <property type="match status" value="1"/>
</dbReference>
<dbReference type="SUPFAM" id="SSF50193">
    <property type="entry name" value="Ribosomal protein L14"/>
    <property type="match status" value="1"/>
</dbReference>
<dbReference type="PROSITE" id="PS00049">
    <property type="entry name" value="RIBOSOMAL_L14"/>
    <property type="match status" value="1"/>
</dbReference>
<accession>Q7VGD4</accession>
<protein>
    <recommendedName>
        <fullName evidence="1">Large ribosomal subunit protein uL14</fullName>
    </recommendedName>
    <alternativeName>
        <fullName evidence="2">50S ribosomal protein L14</fullName>
    </alternativeName>
</protein>
<sequence>MIQSFTRLSVADNSGAKEIMCIKILGGSHRRYARVGDVIVASVKKAIPNGKVKKGQVVKAVVVRTKKEIHRENGSLVRFDDNAAVILDAKKEPIGTRIFGPVSREVRYANFMKIVSLAPEVL</sequence>
<name>RL14_HELHP</name>
<evidence type="ECO:0000255" key="1">
    <source>
        <dbReference type="HAMAP-Rule" id="MF_01367"/>
    </source>
</evidence>
<evidence type="ECO:0000305" key="2"/>
<feature type="chain" id="PRO_1000055594" description="Large ribosomal subunit protein uL14">
    <location>
        <begin position="1"/>
        <end position="122"/>
    </location>
</feature>
<proteinExistence type="inferred from homology"/>